<keyword id="KW-0012">Acyltransferase</keyword>
<keyword id="KW-0284">Flavonoid biosynthesis</keyword>
<keyword id="KW-0808">Transferase</keyword>
<comment type="function">
    <text>The primary product of this enzyme is 4,2',4',6'-tetrahydroxychalcone (also termed naringenin-chalcone or chalcone) which can under specific conditions spontaneously isomerize into naringenin.</text>
</comment>
<comment type="catalytic activity">
    <reaction evidence="1">
        <text>(E)-4-coumaroyl-CoA + 3 malonyl-CoA + 3 H(+) = 2',4,4',6'-tetrahydroxychalcone + 3 CO2 + 4 CoA</text>
        <dbReference type="Rhea" id="RHEA:11128"/>
        <dbReference type="ChEBI" id="CHEBI:15378"/>
        <dbReference type="ChEBI" id="CHEBI:15413"/>
        <dbReference type="ChEBI" id="CHEBI:16526"/>
        <dbReference type="ChEBI" id="CHEBI:57287"/>
        <dbReference type="ChEBI" id="CHEBI:57384"/>
        <dbReference type="ChEBI" id="CHEBI:85008"/>
        <dbReference type="EC" id="2.3.1.74"/>
    </reaction>
</comment>
<comment type="pathway">
    <text>Secondary metabolite biosynthesis; flavonoid biosynthesis.</text>
</comment>
<comment type="induction">
    <text>By wounding and Rhizobium infection.</text>
</comment>
<comment type="similarity">
    <text evidence="2">Belongs to the thiolase-like superfamily. Chalcone/stilbene synthases family.</text>
</comment>
<feature type="chain" id="PRO_0000216073" description="Chalcone synthase 6">
    <location>
        <begin position="1"/>
        <end position="389"/>
    </location>
</feature>
<feature type="active site" evidence="1">
    <location>
        <position position="164"/>
    </location>
</feature>
<organism>
    <name type="scientific">Trifolium subterraneum</name>
    <name type="common">Subterranean clover</name>
    <dbReference type="NCBI Taxonomy" id="3900"/>
    <lineage>
        <taxon>Eukaryota</taxon>
        <taxon>Viridiplantae</taxon>
        <taxon>Streptophyta</taxon>
        <taxon>Embryophyta</taxon>
        <taxon>Tracheophyta</taxon>
        <taxon>Spermatophyta</taxon>
        <taxon>Magnoliopsida</taxon>
        <taxon>eudicotyledons</taxon>
        <taxon>Gunneridae</taxon>
        <taxon>Pentapetalae</taxon>
        <taxon>rosids</taxon>
        <taxon>fabids</taxon>
        <taxon>Fabales</taxon>
        <taxon>Fabaceae</taxon>
        <taxon>Papilionoideae</taxon>
        <taxon>50 kb inversion clade</taxon>
        <taxon>NPAAA clade</taxon>
        <taxon>Hologalegina</taxon>
        <taxon>IRL clade</taxon>
        <taxon>Trifolieae</taxon>
        <taxon>Trifolium</taxon>
    </lineage>
</organism>
<reference key="1">
    <citation type="journal article" date="1995" name="Plant Physiol.">
        <title>Nucleotide sequence of additional members of the gene family encoding chalcone synthase in Trifolium subterraneum.</title>
        <authorList>
            <person name="Howles P.A."/>
            <person name="Arioli T."/>
            <person name="Weinman J.J."/>
        </authorList>
    </citation>
    <scope>NUCLEOTIDE SEQUENCE [GENOMIC DNA]</scope>
    <source>
        <strain>cv. Karridale</strain>
        <tissue>Leaf</tissue>
        <tissue>Stem</tissue>
    </source>
</reference>
<gene>
    <name type="primary">CHS6</name>
</gene>
<sequence>MVSVAEIRKAQRAEGPATILAIGTANPANKVEQATYPDFYFKITNSEHKTELKEKFQRMCDKSMIKSRYMYLTEEILKENPSLCEYMAPSLDARQDMVVVEVPRLGKEAAVKAIKEWGQPKSKITHLIFCTTSGVDMPGADYQLTKLLGLRPYVKRYMMYQQGCFAGGTVLRLAKDLAENNKGARVLVVCSEVTAVTFRGPSDTHLDSLVGQALFGDGAAALIVGSDPVPEIEKPIFEMVWTAQTIAPDSEGAIDGHLREAGLTFHLLKDVPGIVSKNIDKALVEAFQPLNISDYNSIFWIAHPGGPAILDQVEQKLALKPEKMKATRDVLSEYGNMSSACVLFILDEMRKKSAQNGLKTTGEGLDWGVLFGFGPGLTIETVVLHSVAI</sequence>
<evidence type="ECO:0000255" key="1">
    <source>
        <dbReference type="PROSITE-ProRule" id="PRU10023"/>
    </source>
</evidence>
<evidence type="ECO:0000305" key="2"/>
<protein>
    <recommendedName>
        <fullName>Chalcone synthase 6</fullName>
        <ecNumber>2.3.1.74</ecNumber>
    </recommendedName>
    <alternativeName>
        <fullName>Naringenin-chalcone synthase 6</fullName>
    </alternativeName>
</protein>
<name>CHS6_TRISU</name>
<dbReference type="EC" id="2.3.1.74"/>
<dbReference type="EMBL" id="M91195">
    <property type="protein sequence ID" value="AAA67701.1"/>
    <property type="molecule type" value="Genomic_DNA"/>
</dbReference>
<dbReference type="SMR" id="P51088"/>
<dbReference type="UniPathway" id="UPA00154"/>
<dbReference type="GO" id="GO:0016210">
    <property type="term" value="F:naringenin-chalcone synthase activity"/>
    <property type="evidence" value="ECO:0007669"/>
    <property type="project" value="UniProtKB-EC"/>
</dbReference>
<dbReference type="GO" id="GO:0009813">
    <property type="term" value="P:flavonoid biosynthetic process"/>
    <property type="evidence" value="ECO:0007669"/>
    <property type="project" value="UniProtKB-UniPathway"/>
</dbReference>
<dbReference type="GO" id="GO:0030639">
    <property type="term" value="P:polyketide biosynthetic process"/>
    <property type="evidence" value="ECO:0007669"/>
    <property type="project" value="TreeGrafter"/>
</dbReference>
<dbReference type="CDD" id="cd00831">
    <property type="entry name" value="CHS_like"/>
    <property type="match status" value="1"/>
</dbReference>
<dbReference type="FunFam" id="3.40.47.10:FF:000014">
    <property type="entry name" value="Chalcone synthase 1"/>
    <property type="match status" value="1"/>
</dbReference>
<dbReference type="FunFam" id="3.40.47.10:FF:000025">
    <property type="entry name" value="Chalcone synthase 2"/>
    <property type="match status" value="1"/>
</dbReference>
<dbReference type="Gene3D" id="3.40.47.10">
    <property type="match status" value="2"/>
</dbReference>
<dbReference type="InterPro" id="IPR012328">
    <property type="entry name" value="Chalcone/stilbene_synt_C"/>
</dbReference>
<dbReference type="InterPro" id="IPR001099">
    <property type="entry name" value="Chalcone/stilbene_synt_N"/>
</dbReference>
<dbReference type="InterPro" id="IPR018088">
    <property type="entry name" value="Chalcone/stilbene_synthase_AS"/>
</dbReference>
<dbReference type="InterPro" id="IPR011141">
    <property type="entry name" value="Polyketide_synthase_type-III"/>
</dbReference>
<dbReference type="InterPro" id="IPR016039">
    <property type="entry name" value="Thiolase-like"/>
</dbReference>
<dbReference type="PANTHER" id="PTHR11877:SF62">
    <property type="entry name" value="CHALCONE SYNTHASE 7"/>
    <property type="match status" value="1"/>
</dbReference>
<dbReference type="PANTHER" id="PTHR11877">
    <property type="entry name" value="HYDROXYMETHYLGLUTARYL-COA SYNTHASE"/>
    <property type="match status" value="1"/>
</dbReference>
<dbReference type="Pfam" id="PF02797">
    <property type="entry name" value="Chal_sti_synt_C"/>
    <property type="match status" value="1"/>
</dbReference>
<dbReference type="Pfam" id="PF00195">
    <property type="entry name" value="Chal_sti_synt_N"/>
    <property type="match status" value="1"/>
</dbReference>
<dbReference type="PIRSF" id="PIRSF000451">
    <property type="entry name" value="PKS_III"/>
    <property type="match status" value="1"/>
</dbReference>
<dbReference type="SUPFAM" id="SSF53901">
    <property type="entry name" value="Thiolase-like"/>
    <property type="match status" value="2"/>
</dbReference>
<dbReference type="PROSITE" id="PS00441">
    <property type="entry name" value="CHALCONE_SYNTH"/>
    <property type="match status" value="1"/>
</dbReference>
<accession>P51088</accession>
<proteinExistence type="evidence at transcript level"/>